<protein>
    <recommendedName>
        <fullName>4-diphosphocytidyl-2-C-methyl-D-erythritol kinase, chloroplastic</fullName>
        <ecNumber>2.7.1.148</ecNumber>
    </recommendedName>
    <alternativeName>
        <fullName>4-(cytidine-5'-diphospho)-2-C-methyl-D-erythritol kinase</fullName>
        <shortName>CMK</shortName>
    </alternativeName>
</protein>
<dbReference type="EC" id="2.7.1.148"/>
<dbReference type="EMBL" id="AF179283">
    <property type="protein sequence ID" value="AAF13866.1"/>
    <property type="molecule type" value="mRNA"/>
</dbReference>
<dbReference type="EMBL" id="AJ249324">
    <property type="protein sequence ID" value="CAB65292.1"/>
    <property type="molecule type" value="mRNA"/>
</dbReference>
<dbReference type="SMR" id="P56848"/>
<dbReference type="BRENDA" id="2.7.4.26">
    <property type="organism ID" value="3222"/>
</dbReference>
<dbReference type="UniPathway" id="UPA00056">
    <property type="reaction ID" value="UER00094"/>
</dbReference>
<dbReference type="GO" id="GO:0009507">
    <property type="term" value="C:chloroplast"/>
    <property type="evidence" value="ECO:0007669"/>
    <property type="project" value="UniProtKB-SubCell"/>
</dbReference>
<dbReference type="GO" id="GO:0050515">
    <property type="term" value="F:4-(cytidine 5'-diphospho)-2-C-methyl-D-erythritol kinase activity"/>
    <property type="evidence" value="ECO:0007669"/>
    <property type="project" value="UniProtKB-EC"/>
</dbReference>
<dbReference type="GO" id="GO:0005524">
    <property type="term" value="F:ATP binding"/>
    <property type="evidence" value="ECO:0007669"/>
    <property type="project" value="UniProtKB-KW"/>
</dbReference>
<dbReference type="GO" id="GO:0019288">
    <property type="term" value="P:isopentenyl diphosphate biosynthetic process, methylerythritol 4-phosphate pathway"/>
    <property type="evidence" value="ECO:0007669"/>
    <property type="project" value="UniProtKB-UniPathway"/>
</dbReference>
<dbReference type="GO" id="GO:0016114">
    <property type="term" value="P:terpenoid biosynthetic process"/>
    <property type="evidence" value="ECO:0007669"/>
    <property type="project" value="InterPro"/>
</dbReference>
<dbReference type="FunFam" id="3.30.230.10:FF:000045">
    <property type="entry name" value="4-diphosphocytidyl-2-C-methyl-D-erythritol kinase, chloroplastic"/>
    <property type="match status" value="1"/>
</dbReference>
<dbReference type="FunFam" id="3.30.70.890:FF:000009">
    <property type="entry name" value="4-diphosphocytidyl-2-C-methyl-D-erythritol kinase, chloroplastic"/>
    <property type="match status" value="1"/>
</dbReference>
<dbReference type="Gene3D" id="3.30.230.10">
    <property type="match status" value="1"/>
</dbReference>
<dbReference type="Gene3D" id="3.30.70.890">
    <property type="entry name" value="GHMP kinase, C-terminal domain"/>
    <property type="match status" value="1"/>
</dbReference>
<dbReference type="HAMAP" id="MF_00061">
    <property type="entry name" value="IspE"/>
    <property type="match status" value="1"/>
</dbReference>
<dbReference type="InterPro" id="IPR013750">
    <property type="entry name" value="GHMP_kinase_C_dom"/>
</dbReference>
<dbReference type="InterPro" id="IPR036554">
    <property type="entry name" value="GHMP_kinase_C_sf"/>
</dbReference>
<dbReference type="InterPro" id="IPR006204">
    <property type="entry name" value="GHMP_kinase_N_dom"/>
</dbReference>
<dbReference type="InterPro" id="IPR004424">
    <property type="entry name" value="IspE"/>
</dbReference>
<dbReference type="InterPro" id="IPR020568">
    <property type="entry name" value="Ribosomal_Su5_D2-typ_SF"/>
</dbReference>
<dbReference type="InterPro" id="IPR014721">
    <property type="entry name" value="Ribsml_uS5_D2-typ_fold_subgr"/>
</dbReference>
<dbReference type="NCBIfam" id="TIGR00154">
    <property type="entry name" value="ispE"/>
    <property type="match status" value="1"/>
</dbReference>
<dbReference type="PANTHER" id="PTHR43527">
    <property type="entry name" value="4-DIPHOSPHOCYTIDYL-2-C-METHYL-D-ERYTHRITOL KINASE, CHLOROPLASTIC"/>
    <property type="match status" value="1"/>
</dbReference>
<dbReference type="PANTHER" id="PTHR43527:SF2">
    <property type="entry name" value="4-DIPHOSPHOCYTIDYL-2-C-METHYL-D-ERYTHRITOL KINASE, CHLOROPLASTIC"/>
    <property type="match status" value="1"/>
</dbReference>
<dbReference type="Pfam" id="PF08544">
    <property type="entry name" value="GHMP_kinases_C"/>
    <property type="match status" value="1"/>
</dbReference>
<dbReference type="Pfam" id="PF00288">
    <property type="entry name" value="GHMP_kinases_N"/>
    <property type="match status" value="1"/>
</dbReference>
<dbReference type="SUPFAM" id="SSF55060">
    <property type="entry name" value="GHMP Kinase, C-terminal domain"/>
    <property type="match status" value="1"/>
</dbReference>
<dbReference type="SUPFAM" id="SSF54211">
    <property type="entry name" value="Ribosomal protein S5 domain 2-like"/>
    <property type="match status" value="1"/>
</dbReference>
<evidence type="ECO:0000250" key="1"/>
<evidence type="ECO:0000255" key="2"/>
<evidence type="ECO:0000305" key="3"/>
<evidence type="ECO:0000305" key="4">
    <source>
    </source>
</evidence>
<keyword id="KW-0067">ATP-binding</keyword>
<keyword id="KW-0150">Chloroplast</keyword>
<keyword id="KW-0414">Isoprene biosynthesis</keyword>
<keyword id="KW-0418">Kinase</keyword>
<keyword id="KW-0547">Nucleotide-binding</keyword>
<keyword id="KW-0934">Plastid</keyword>
<keyword id="KW-0808">Transferase</keyword>
<keyword id="KW-0809">Transit peptide</keyword>
<feature type="transit peptide" description="Chloroplast" evidence="2">
    <location>
        <begin position="1"/>
        <end position="97"/>
    </location>
</feature>
<feature type="chain" id="PRO_0000016481" description="4-diphosphocytidyl-2-C-methyl-D-erythritol kinase, chloroplastic">
    <location>
        <begin position="98"/>
        <end position="405"/>
    </location>
</feature>
<feature type="binding site" evidence="2">
    <location>
        <begin position="190"/>
        <end position="200"/>
    </location>
    <ligand>
        <name>ATP</name>
        <dbReference type="ChEBI" id="CHEBI:30616"/>
    </ligand>
</feature>
<comment type="function">
    <text evidence="1">Catalyzes the phosphorylation of the position 2 hydroxy group of 4-diphosphocytidyl-2C-methyl-D-erythritol.</text>
</comment>
<comment type="catalytic activity">
    <reaction>
        <text>4-CDP-2-C-methyl-D-erythritol + ATP = 4-CDP-2-C-methyl-D-erythritol 2-phosphate + ADP + H(+)</text>
        <dbReference type="Rhea" id="RHEA:18437"/>
        <dbReference type="ChEBI" id="CHEBI:15378"/>
        <dbReference type="ChEBI" id="CHEBI:30616"/>
        <dbReference type="ChEBI" id="CHEBI:57823"/>
        <dbReference type="ChEBI" id="CHEBI:57919"/>
        <dbReference type="ChEBI" id="CHEBI:456216"/>
        <dbReference type="EC" id="2.7.1.148"/>
    </reaction>
</comment>
<comment type="pathway">
    <text>Isoprenoid biosynthesis; isopentenyl diphosphate biosynthesis via DXP pathway; isopentenyl diphosphate from 1-deoxy-D-xylulose 5-phosphate: step 3/6.</text>
</comment>
<comment type="subcellular location">
    <subcellularLocation>
        <location evidence="1">Plastid</location>
        <location evidence="1">Chloroplast</location>
    </subcellularLocation>
</comment>
<comment type="similarity">
    <text evidence="3">Belongs to the GHMP kinase family. IspE subfamily.</text>
</comment>
<comment type="caution">
    <text evidence="4">Was originally thought to be an isopentenyl monophosphate kinase.</text>
</comment>
<gene>
    <name type="primary">ISPE</name>
    <name type="synonym">IPK</name>
</gene>
<organism>
    <name type="scientific">Mentha piperita</name>
    <name type="common">Peppermint</name>
    <name type="synonym">Mentha aquatica x Mentha spicata</name>
    <dbReference type="NCBI Taxonomy" id="34256"/>
    <lineage>
        <taxon>Eukaryota</taxon>
        <taxon>Viridiplantae</taxon>
        <taxon>Streptophyta</taxon>
        <taxon>Embryophyta</taxon>
        <taxon>Tracheophyta</taxon>
        <taxon>Spermatophyta</taxon>
        <taxon>Magnoliopsida</taxon>
        <taxon>eudicotyledons</taxon>
        <taxon>Gunneridae</taxon>
        <taxon>Pentapetalae</taxon>
        <taxon>asterids</taxon>
        <taxon>lamiids</taxon>
        <taxon>Lamiales</taxon>
        <taxon>Lamiaceae</taxon>
        <taxon>Nepetoideae</taxon>
        <taxon>Mentheae</taxon>
        <taxon>Menthinae</taxon>
        <taxon>Mentha</taxon>
    </lineage>
</organism>
<sequence>MASSSHFLYSHHHSYASYNSKSHFNSFTNATFPQFSSFKPNGSSSFRKKLQSSRIHIIRAAASDPTTGRNQLEVVYDLENKLNKLADEVDREAGISRLTLFSPCKINVFLRITGKREDGFHDLASLFHVISLGDKIKFSLSPSKFNGSFVTNVPGVPLDEKNLIIKALNLFRKKTGTDKHFWIHLDKKVPTGAGLGGGSSNAATALWAANQFSGCIATEKDLQEWSGEIGSDIPFFFSHGAAYCTGRGEVVEDIPPPVPRDLSMVLMKPQEACPTGEVYKRLRLDQTSDIDPLVLLEKISKGGISQDVCVNDLEPPAFEVVPSLKRLKQRIAAAGRSQYDAVFMSGSGSTIVGVGSPDPPQFVYDGDEYKNIFFSEAKFITRSANQWYSEPLSTDESPSFPQDAE</sequence>
<proteinExistence type="evidence at protein level"/>
<name>ISPE_MENPI</name>
<accession>P56848</accession>
<reference key="1">
    <citation type="journal article" date="1999" name="Proc. Natl. Acad. Sci. U.S.A.">
        <title>Isopentenyl diphosphate biosynthesis via a mevalonate-independent pathway: isopentenyl monophosphate kinase catalyzes the terminal enzymatic step.</title>
        <authorList>
            <person name="Lange B.M."/>
            <person name="Croteau R."/>
        </authorList>
    </citation>
    <scope>NUCLEOTIDE SEQUENCE [MRNA]</scope>
    <scope>CHARACTERIZATION</scope>
    <source>
        <strain>cv. Black Mitcham</strain>
    </source>
</reference>